<sequence>MSAVPLTRMLPLRFLTHLLLLSFIPLYFCMEFSEDARNIEKIRRGNQWAIGHFMGKKSLQDTYNPSEQDMDSEDFRPRIIEMIRGTFRQEPIRALSPRKQDEIQWMLKKIMDDYIKTTQK</sequence>
<gene>
    <name type="primary">nmb</name>
</gene>
<evidence type="ECO:0000250" key="1">
    <source>
        <dbReference type="UniProtKB" id="P01297"/>
    </source>
</evidence>
<evidence type="ECO:0000250" key="2">
    <source>
        <dbReference type="UniProtKB" id="Q9CR53"/>
    </source>
</evidence>
<evidence type="ECO:0000255" key="3"/>
<evidence type="ECO:0000269" key="4">
    <source>
    </source>
</evidence>
<evidence type="ECO:0000305" key="5"/>
<protein>
    <recommendedName>
        <fullName>Neuromedin-B</fullName>
    </recommendedName>
</protein>
<accession>P43443</accession>
<keyword id="KW-0027">Amidation</keyword>
<keyword id="KW-0165">Cleavage on pair of basic residues</keyword>
<keyword id="KW-1185">Reference proteome</keyword>
<keyword id="KW-0964">Secreted</keyword>
<keyword id="KW-0732">Signal</keyword>
<dbReference type="EMBL" id="L01530">
    <property type="protein sequence ID" value="AAA49912.1"/>
    <property type="molecule type" value="mRNA"/>
</dbReference>
<dbReference type="PIR" id="A47201">
    <property type="entry name" value="A47201"/>
</dbReference>
<dbReference type="RefSeq" id="NP_001079342.1">
    <property type="nucleotide sequence ID" value="NM_001085873.2"/>
</dbReference>
<dbReference type="SMR" id="P43443"/>
<dbReference type="GeneID" id="378672"/>
<dbReference type="KEGG" id="xla:378672"/>
<dbReference type="AGR" id="Xenbase:XB-GENE-5967572"/>
<dbReference type="CTD" id="378672"/>
<dbReference type="Xenbase" id="XB-GENE-5967572">
    <property type="gene designation" value="nmb.S"/>
</dbReference>
<dbReference type="OrthoDB" id="9535999at2759"/>
<dbReference type="Proteomes" id="UP000186698">
    <property type="component" value="Chromosome 3S"/>
</dbReference>
<dbReference type="Bgee" id="378672">
    <property type="expression patterns" value="Expressed in brain and 11 other cell types or tissues"/>
</dbReference>
<dbReference type="GO" id="GO:0005576">
    <property type="term" value="C:extracellular region"/>
    <property type="evidence" value="ECO:0007669"/>
    <property type="project" value="UniProtKB-SubCell"/>
</dbReference>
<dbReference type="GO" id="GO:0007218">
    <property type="term" value="P:neuropeptide signaling pathway"/>
    <property type="evidence" value="ECO:0007669"/>
    <property type="project" value="InterPro"/>
</dbReference>
<dbReference type="InterPro" id="IPR000874">
    <property type="entry name" value="Bombesin"/>
</dbReference>
<dbReference type="Pfam" id="PF02044">
    <property type="entry name" value="Bombesin"/>
    <property type="match status" value="1"/>
</dbReference>
<dbReference type="PROSITE" id="PS00257">
    <property type="entry name" value="BOMBESIN"/>
    <property type="match status" value="1"/>
</dbReference>
<feature type="signal peptide" evidence="3">
    <location>
        <begin position="1"/>
        <end position="29"/>
    </location>
</feature>
<feature type="propeptide" id="PRO_0000003024" evidence="5">
    <location>
        <begin position="30"/>
        <end position="44"/>
    </location>
</feature>
<feature type="peptide" id="PRO_0000003025" description="Neuromedin-B" evidence="1">
    <location>
        <begin position="45"/>
        <end position="54"/>
    </location>
</feature>
<feature type="propeptide" id="PRO_0000003026" evidence="1">
    <location>
        <begin position="58"/>
        <end position="120"/>
    </location>
</feature>
<feature type="modified residue" description="Methionine amide" evidence="1">
    <location>
        <position position="54"/>
    </location>
</feature>
<reference key="1">
    <citation type="journal article" date="1992" name="Proc. Natl. Acad. Sci. U.S.A.">
        <title>Isolation and sequence of a cDNA encoding the precursor of a bombesin-like peptide from brain and early embryos of Xenopus laevis.</title>
        <authorList>
            <person name="Wechselberger C."/>
            <person name="Kreil G."/>
            <person name="Richter K."/>
        </authorList>
    </citation>
    <scope>NUCLEOTIDE SEQUENCE [MRNA]</scope>
    <scope>TISSUE SPECIFICITY</scope>
    <source>
        <tissue>Brain</tissue>
    </source>
</reference>
<organism>
    <name type="scientific">Xenopus laevis</name>
    <name type="common">African clawed frog</name>
    <dbReference type="NCBI Taxonomy" id="8355"/>
    <lineage>
        <taxon>Eukaryota</taxon>
        <taxon>Metazoa</taxon>
        <taxon>Chordata</taxon>
        <taxon>Craniata</taxon>
        <taxon>Vertebrata</taxon>
        <taxon>Euteleostomi</taxon>
        <taxon>Amphibia</taxon>
        <taxon>Batrachia</taxon>
        <taxon>Anura</taxon>
        <taxon>Pipoidea</taxon>
        <taxon>Pipidae</taxon>
        <taxon>Xenopodinae</taxon>
        <taxon>Xenopus</taxon>
        <taxon>Xenopus</taxon>
    </lineage>
</organism>
<name>NMB_XENLA</name>
<proteinExistence type="evidence at transcript level"/>
<comment type="function">
    <text evidence="1">Stimulates smooth muscle contraction.</text>
</comment>
<comment type="subcellular location">
    <subcellularLocation>
        <location evidence="2">Secreted</location>
    </subcellularLocation>
</comment>
<comment type="tissue specificity">
    <text evidence="4">Brain, intestine, and ovaries and early embryos (stages 2 and 10).</text>
</comment>
<comment type="similarity">
    <text evidence="5">Belongs to the bombesin/neuromedin-B/ranatensin family.</text>
</comment>